<dbReference type="EMBL" id="AF198100">
    <property type="protein sequence ID" value="AAF44389.1"/>
    <property type="molecule type" value="Genomic_DNA"/>
</dbReference>
<dbReference type="RefSeq" id="NP_039009.1">
    <property type="nucleotide sequence ID" value="NC_002188.1"/>
</dbReference>
<dbReference type="SMR" id="Q9J5F7"/>
<dbReference type="GeneID" id="1486593"/>
<dbReference type="KEGG" id="vg:1486593"/>
<dbReference type="Proteomes" id="UP000008597">
    <property type="component" value="Segment"/>
</dbReference>
<keyword id="KW-1185">Reference proteome</keyword>
<organismHost>
    <name type="scientific">Vertebrata</name>
    <dbReference type="NCBI Taxonomy" id="7742"/>
</organismHost>
<proteinExistence type="predicted"/>
<feature type="chain" id="PRO_0000099729" description="Uncharacterized protein FPV045">
    <location>
        <begin position="1"/>
        <end position="73"/>
    </location>
</feature>
<sequence>MCLPKNPHPPVTTYTSVRILSINYIRPKLYFHFLLYYTIIKTNKYTNIIRNLEHVIKVLPFLLTACSCNCRLE</sequence>
<organism>
    <name type="scientific">Fowlpox virus (strain NVSL)</name>
    <name type="common">FPV</name>
    <dbReference type="NCBI Taxonomy" id="928301"/>
    <lineage>
        <taxon>Viruses</taxon>
        <taxon>Varidnaviria</taxon>
        <taxon>Bamfordvirae</taxon>
        <taxon>Nucleocytoviricota</taxon>
        <taxon>Pokkesviricetes</taxon>
        <taxon>Chitovirales</taxon>
        <taxon>Poxviridae</taxon>
        <taxon>Chordopoxvirinae</taxon>
        <taxon>Avipoxvirus</taxon>
        <taxon>Fowlpox virus</taxon>
    </lineage>
</organism>
<name>V045_FOWPN</name>
<accession>Q9J5F7</accession>
<protein>
    <recommendedName>
        <fullName>Uncharacterized protein FPV045</fullName>
    </recommendedName>
</protein>
<reference key="1">
    <citation type="journal article" date="2000" name="J. Virol.">
        <title>The genome of fowlpox virus.</title>
        <authorList>
            <person name="Afonso C.L."/>
            <person name="Tulman E.R."/>
            <person name="Lu Z."/>
            <person name="Zsak L."/>
            <person name="Kutish G.F."/>
            <person name="Rock D.L."/>
        </authorList>
    </citation>
    <scope>NUCLEOTIDE SEQUENCE [LARGE SCALE GENOMIC DNA]</scope>
</reference>
<gene>
    <name type="ordered locus">FPV045</name>
</gene>